<name>PRMC_GEOSL</name>
<comment type="function">
    <text evidence="1">Methylates the class 1 translation termination release factors RF1/PrfA and RF2/PrfB on the glutamine residue of the universally conserved GGQ motif.</text>
</comment>
<comment type="catalytic activity">
    <reaction evidence="1">
        <text>L-glutaminyl-[peptide chain release factor] + S-adenosyl-L-methionine = N(5)-methyl-L-glutaminyl-[peptide chain release factor] + S-adenosyl-L-homocysteine + H(+)</text>
        <dbReference type="Rhea" id="RHEA:42896"/>
        <dbReference type="Rhea" id="RHEA-COMP:10271"/>
        <dbReference type="Rhea" id="RHEA-COMP:10272"/>
        <dbReference type="ChEBI" id="CHEBI:15378"/>
        <dbReference type="ChEBI" id="CHEBI:30011"/>
        <dbReference type="ChEBI" id="CHEBI:57856"/>
        <dbReference type="ChEBI" id="CHEBI:59789"/>
        <dbReference type="ChEBI" id="CHEBI:61891"/>
        <dbReference type="EC" id="2.1.1.297"/>
    </reaction>
</comment>
<comment type="similarity">
    <text evidence="1">Belongs to the protein N5-glutamine methyltransferase family. PrmC subfamily.</text>
</comment>
<feature type="chain" id="PRO_0000414524" description="Release factor glutamine methyltransferase">
    <location>
        <begin position="1"/>
        <end position="284"/>
    </location>
</feature>
<feature type="binding site" evidence="1">
    <location>
        <begin position="125"/>
        <end position="129"/>
    </location>
    <ligand>
        <name>S-adenosyl-L-methionine</name>
        <dbReference type="ChEBI" id="CHEBI:59789"/>
    </ligand>
</feature>
<feature type="binding site" evidence="1">
    <location>
        <position position="148"/>
    </location>
    <ligand>
        <name>S-adenosyl-L-methionine</name>
        <dbReference type="ChEBI" id="CHEBI:59789"/>
    </ligand>
</feature>
<feature type="binding site" evidence="1">
    <location>
        <begin position="190"/>
        <end position="193"/>
    </location>
    <ligand>
        <name>substrate</name>
    </ligand>
</feature>
<feature type="binding site" evidence="1">
    <location>
        <position position="190"/>
    </location>
    <ligand>
        <name>S-adenosyl-L-methionine</name>
        <dbReference type="ChEBI" id="CHEBI:59789"/>
    </ligand>
</feature>
<dbReference type="EC" id="2.1.1.297" evidence="1"/>
<dbReference type="EMBL" id="AE017180">
    <property type="protein sequence ID" value="AAR36494.1"/>
    <property type="molecule type" value="Genomic_DNA"/>
</dbReference>
<dbReference type="RefSeq" id="NP_954144.1">
    <property type="nucleotide sequence ID" value="NC_002939.5"/>
</dbReference>
<dbReference type="RefSeq" id="WP_010943724.1">
    <property type="nucleotide sequence ID" value="NC_002939.5"/>
</dbReference>
<dbReference type="SMR" id="Q748B2"/>
<dbReference type="FunCoup" id="Q748B2">
    <property type="interactions" value="459"/>
</dbReference>
<dbReference type="STRING" id="243231.GSU3103"/>
<dbReference type="EnsemblBacteria" id="AAR36494">
    <property type="protein sequence ID" value="AAR36494"/>
    <property type="gene ID" value="GSU3103"/>
</dbReference>
<dbReference type="KEGG" id="gsu:GSU3103"/>
<dbReference type="PATRIC" id="fig|243231.5.peg.3127"/>
<dbReference type="eggNOG" id="COG2890">
    <property type="taxonomic scope" value="Bacteria"/>
</dbReference>
<dbReference type="HOGENOM" id="CLU_018398_3_1_7"/>
<dbReference type="InParanoid" id="Q748B2"/>
<dbReference type="OrthoDB" id="9800643at2"/>
<dbReference type="Proteomes" id="UP000000577">
    <property type="component" value="Chromosome"/>
</dbReference>
<dbReference type="GO" id="GO:0003676">
    <property type="term" value="F:nucleic acid binding"/>
    <property type="evidence" value="ECO:0007669"/>
    <property type="project" value="InterPro"/>
</dbReference>
<dbReference type="GO" id="GO:0102559">
    <property type="term" value="F:protein-(glutamine-N5) methyltransferase activity"/>
    <property type="evidence" value="ECO:0007669"/>
    <property type="project" value="UniProtKB-EC"/>
</dbReference>
<dbReference type="GO" id="GO:0036009">
    <property type="term" value="F:protein-glutamine N-methyltransferase activity"/>
    <property type="evidence" value="ECO:0000318"/>
    <property type="project" value="GO_Central"/>
</dbReference>
<dbReference type="GO" id="GO:0032259">
    <property type="term" value="P:methylation"/>
    <property type="evidence" value="ECO:0007669"/>
    <property type="project" value="UniProtKB-KW"/>
</dbReference>
<dbReference type="GO" id="GO:0006415">
    <property type="term" value="P:translational termination"/>
    <property type="evidence" value="ECO:0000318"/>
    <property type="project" value="GO_Central"/>
</dbReference>
<dbReference type="CDD" id="cd02440">
    <property type="entry name" value="AdoMet_MTases"/>
    <property type="match status" value="1"/>
</dbReference>
<dbReference type="FunFam" id="3.40.50.150:FF:000053">
    <property type="entry name" value="Release factor glutamine methyltransferase"/>
    <property type="match status" value="1"/>
</dbReference>
<dbReference type="Gene3D" id="1.10.8.10">
    <property type="entry name" value="DNA helicase RuvA subunit, C-terminal domain"/>
    <property type="match status" value="1"/>
</dbReference>
<dbReference type="Gene3D" id="3.40.50.150">
    <property type="entry name" value="Vaccinia Virus protein VP39"/>
    <property type="match status" value="1"/>
</dbReference>
<dbReference type="HAMAP" id="MF_02126">
    <property type="entry name" value="RF_methyltr_PrmC"/>
    <property type="match status" value="1"/>
</dbReference>
<dbReference type="InterPro" id="IPR002052">
    <property type="entry name" value="DNA_methylase_N6_adenine_CS"/>
</dbReference>
<dbReference type="InterPro" id="IPR004556">
    <property type="entry name" value="HemK-like"/>
</dbReference>
<dbReference type="InterPro" id="IPR050320">
    <property type="entry name" value="N5-glutamine_MTase"/>
</dbReference>
<dbReference type="InterPro" id="IPR040758">
    <property type="entry name" value="PrmC_N"/>
</dbReference>
<dbReference type="InterPro" id="IPR019874">
    <property type="entry name" value="RF_methyltr_PrmC"/>
</dbReference>
<dbReference type="InterPro" id="IPR029063">
    <property type="entry name" value="SAM-dependent_MTases_sf"/>
</dbReference>
<dbReference type="InterPro" id="IPR007848">
    <property type="entry name" value="Small_mtfrase_dom"/>
</dbReference>
<dbReference type="NCBIfam" id="TIGR00536">
    <property type="entry name" value="hemK_fam"/>
    <property type="match status" value="1"/>
</dbReference>
<dbReference type="NCBIfam" id="TIGR03534">
    <property type="entry name" value="RF_mod_PrmC"/>
    <property type="match status" value="1"/>
</dbReference>
<dbReference type="PANTHER" id="PTHR18895">
    <property type="entry name" value="HEMK METHYLTRANSFERASE"/>
    <property type="match status" value="1"/>
</dbReference>
<dbReference type="PANTHER" id="PTHR18895:SF74">
    <property type="entry name" value="MTRF1L RELEASE FACTOR GLUTAMINE METHYLTRANSFERASE"/>
    <property type="match status" value="1"/>
</dbReference>
<dbReference type="Pfam" id="PF05175">
    <property type="entry name" value="MTS"/>
    <property type="match status" value="1"/>
</dbReference>
<dbReference type="Pfam" id="PF17827">
    <property type="entry name" value="PrmC_N"/>
    <property type="match status" value="1"/>
</dbReference>
<dbReference type="SUPFAM" id="SSF53335">
    <property type="entry name" value="S-adenosyl-L-methionine-dependent methyltransferases"/>
    <property type="match status" value="1"/>
</dbReference>
<sequence length="284" mass="30971">MTEKPEIWTIRKVLDWTRGYLAEKGVENARLETEWLLSAALGLDRVGLYVNFDKPLNPEELAACRGLVARRAKREPLQYILGTQEFCGLDFVVTPSVLIPRHDTEVIVEEALRRAPHAAAVLDIGVGSGCIAVALAKQLPHAQVVGVEQSPGAIALAQRNAERHGARVTLFEGSLFEPLGDQRFDLIVSNPPYIPTADLEALQPEVREYEPRAALDGGSDGLDFYRLIVPAAPEYLNPGGWLMVELGIGQAETVLGMFSRTGFCDCFTAQDPNGIDRVVGGRIG</sequence>
<organism>
    <name type="scientific">Geobacter sulfurreducens (strain ATCC 51573 / DSM 12127 / PCA)</name>
    <dbReference type="NCBI Taxonomy" id="243231"/>
    <lineage>
        <taxon>Bacteria</taxon>
        <taxon>Pseudomonadati</taxon>
        <taxon>Thermodesulfobacteriota</taxon>
        <taxon>Desulfuromonadia</taxon>
        <taxon>Geobacterales</taxon>
        <taxon>Geobacteraceae</taxon>
        <taxon>Geobacter</taxon>
    </lineage>
</organism>
<proteinExistence type="inferred from homology"/>
<reference key="1">
    <citation type="journal article" date="2003" name="Science">
        <title>Genome of Geobacter sulfurreducens: metal reduction in subsurface environments.</title>
        <authorList>
            <person name="Methe B.A."/>
            <person name="Nelson K.E."/>
            <person name="Eisen J.A."/>
            <person name="Paulsen I.T."/>
            <person name="Nelson W.C."/>
            <person name="Heidelberg J.F."/>
            <person name="Wu D."/>
            <person name="Wu M."/>
            <person name="Ward N.L."/>
            <person name="Beanan M.J."/>
            <person name="Dodson R.J."/>
            <person name="Madupu R."/>
            <person name="Brinkac L.M."/>
            <person name="Daugherty S.C."/>
            <person name="DeBoy R.T."/>
            <person name="Durkin A.S."/>
            <person name="Gwinn M.L."/>
            <person name="Kolonay J.F."/>
            <person name="Sullivan S.A."/>
            <person name="Haft D.H."/>
            <person name="Selengut J."/>
            <person name="Davidsen T.M."/>
            <person name="Zafar N."/>
            <person name="White O."/>
            <person name="Tran B."/>
            <person name="Romero C."/>
            <person name="Forberger H.A."/>
            <person name="Weidman J.F."/>
            <person name="Khouri H.M."/>
            <person name="Feldblyum T.V."/>
            <person name="Utterback T.R."/>
            <person name="Van Aken S.E."/>
            <person name="Lovley D.R."/>
            <person name="Fraser C.M."/>
        </authorList>
    </citation>
    <scope>NUCLEOTIDE SEQUENCE [LARGE SCALE GENOMIC DNA]</scope>
    <source>
        <strain>ATCC 51573 / DSM 12127 / PCA</strain>
    </source>
</reference>
<protein>
    <recommendedName>
        <fullName evidence="1">Release factor glutamine methyltransferase</fullName>
        <shortName evidence="1">RF MTase</shortName>
        <ecNumber evidence="1">2.1.1.297</ecNumber>
    </recommendedName>
    <alternativeName>
        <fullName evidence="1">N5-glutamine methyltransferase PrmC</fullName>
    </alternativeName>
    <alternativeName>
        <fullName evidence="1">Protein-(glutamine-N5) MTase PrmC</fullName>
    </alternativeName>
    <alternativeName>
        <fullName evidence="1">Protein-glutamine N-methyltransferase PrmC</fullName>
    </alternativeName>
</protein>
<accession>Q748B2</accession>
<keyword id="KW-0489">Methyltransferase</keyword>
<keyword id="KW-1185">Reference proteome</keyword>
<keyword id="KW-0949">S-adenosyl-L-methionine</keyword>
<keyword id="KW-0808">Transferase</keyword>
<evidence type="ECO:0000255" key="1">
    <source>
        <dbReference type="HAMAP-Rule" id="MF_02126"/>
    </source>
</evidence>
<gene>
    <name evidence="1" type="primary">prmC</name>
    <name type="ordered locus">GSU3103</name>
</gene>